<organism>
    <name type="scientific">Schizosaccharomyces pombe (strain 972 / ATCC 24843)</name>
    <name type="common">Fission yeast</name>
    <dbReference type="NCBI Taxonomy" id="284812"/>
    <lineage>
        <taxon>Eukaryota</taxon>
        <taxon>Fungi</taxon>
        <taxon>Dikarya</taxon>
        <taxon>Ascomycota</taxon>
        <taxon>Taphrinomycotina</taxon>
        <taxon>Schizosaccharomycetes</taxon>
        <taxon>Schizosaccharomycetales</taxon>
        <taxon>Schizosaccharomycetaceae</taxon>
        <taxon>Schizosaccharomyces</taxon>
    </lineage>
</organism>
<proteinExistence type="inferred from homology"/>
<comment type="subcellular location">
    <subcellularLocation>
        <location evidence="5">Membrane</location>
        <topology evidence="5">Single-pass membrane protein</topology>
    </subcellularLocation>
</comment>
<comment type="similarity">
    <text evidence="5">Belongs to the glycosyl hydrolase 16 family.</text>
</comment>
<accession>Q9USW3</accession>
<evidence type="ECO:0000250" key="1"/>
<evidence type="ECO:0000255" key="2"/>
<evidence type="ECO:0000255" key="3">
    <source>
        <dbReference type="PROSITE-ProRule" id="PRU01098"/>
    </source>
</evidence>
<evidence type="ECO:0000256" key="4">
    <source>
        <dbReference type="SAM" id="MobiDB-lite"/>
    </source>
</evidence>
<evidence type="ECO:0000305" key="5"/>
<reference key="1">
    <citation type="journal article" date="2002" name="Nature">
        <title>The genome sequence of Schizosaccharomyces pombe.</title>
        <authorList>
            <person name="Wood V."/>
            <person name="Gwilliam R."/>
            <person name="Rajandream M.A."/>
            <person name="Lyne M.H."/>
            <person name="Lyne R."/>
            <person name="Stewart A."/>
            <person name="Sgouros J.G."/>
            <person name="Peat N."/>
            <person name="Hayles J."/>
            <person name="Baker S.G."/>
            <person name="Basham D."/>
            <person name="Bowman S."/>
            <person name="Brooks K."/>
            <person name="Brown D."/>
            <person name="Brown S."/>
            <person name="Chillingworth T."/>
            <person name="Churcher C.M."/>
            <person name="Collins M."/>
            <person name="Connor R."/>
            <person name="Cronin A."/>
            <person name="Davis P."/>
            <person name="Feltwell T."/>
            <person name="Fraser A."/>
            <person name="Gentles S."/>
            <person name="Goble A."/>
            <person name="Hamlin N."/>
            <person name="Harris D.E."/>
            <person name="Hidalgo J."/>
            <person name="Hodgson G."/>
            <person name="Holroyd S."/>
            <person name="Hornsby T."/>
            <person name="Howarth S."/>
            <person name="Huckle E.J."/>
            <person name="Hunt S."/>
            <person name="Jagels K."/>
            <person name="James K.D."/>
            <person name="Jones L."/>
            <person name="Jones M."/>
            <person name="Leather S."/>
            <person name="McDonald S."/>
            <person name="McLean J."/>
            <person name="Mooney P."/>
            <person name="Moule S."/>
            <person name="Mungall K.L."/>
            <person name="Murphy L.D."/>
            <person name="Niblett D."/>
            <person name="Odell C."/>
            <person name="Oliver K."/>
            <person name="O'Neil S."/>
            <person name="Pearson D."/>
            <person name="Quail M.A."/>
            <person name="Rabbinowitsch E."/>
            <person name="Rutherford K.M."/>
            <person name="Rutter S."/>
            <person name="Saunders D."/>
            <person name="Seeger K."/>
            <person name="Sharp S."/>
            <person name="Skelton J."/>
            <person name="Simmonds M.N."/>
            <person name="Squares R."/>
            <person name="Squares S."/>
            <person name="Stevens K."/>
            <person name="Taylor K."/>
            <person name="Taylor R.G."/>
            <person name="Tivey A."/>
            <person name="Walsh S.V."/>
            <person name="Warren T."/>
            <person name="Whitehead S."/>
            <person name="Woodward J.R."/>
            <person name="Volckaert G."/>
            <person name="Aert R."/>
            <person name="Robben J."/>
            <person name="Grymonprez B."/>
            <person name="Weltjens I."/>
            <person name="Vanstreels E."/>
            <person name="Rieger M."/>
            <person name="Schaefer M."/>
            <person name="Mueller-Auer S."/>
            <person name="Gabel C."/>
            <person name="Fuchs M."/>
            <person name="Duesterhoeft A."/>
            <person name="Fritzc C."/>
            <person name="Holzer E."/>
            <person name="Moestl D."/>
            <person name="Hilbert H."/>
            <person name="Borzym K."/>
            <person name="Langer I."/>
            <person name="Beck A."/>
            <person name="Lehrach H."/>
            <person name="Reinhardt R."/>
            <person name="Pohl T.M."/>
            <person name="Eger P."/>
            <person name="Zimmermann W."/>
            <person name="Wedler H."/>
            <person name="Wambutt R."/>
            <person name="Purnelle B."/>
            <person name="Goffeau A."/>
            <person name="Cadieu E."/>
            <person name="Dreano S."/>
            <person name="Gloux S."/>
            <person name="Lelaure V."/>
            <person name="Mottier S."/>
            <person name="Galibert F."/>
            <person name="Aves S.J."/>
            <person name="Xiang Z."/>
            <person name="Hunt C."/>
            <person name="Moore K."/>
            <person name="Hurst S.M."/>
            <person name="Lucas M."/>
            <person name="Rochet M."/>
            <person name="Gaillardin C."/>
            <person name="Tallada V.A."/>
            <person name="Garzon A."/>
            <person name="Thode G."/>
            <person name="Daga R.R."/>
            <person name="Cruzado L."/>
            <person name="Jimenez J."/>
            <person name="Sanchez M."/>
            <person name="del Rey F."/>
            <person name="Benito J."/>
            <person name="Dominguez A."/>
            <person name="Revuelta J.L."/>
            <person name="Moreno S."/>
            <person name="Armstrong J."/>
            <person name="Forsburg S.L."/>
            <person name="Cerutti L."/>
            <person name="Lowe T."/>
            <person name="McCombie W.R."/>
            <person name="Paulsen I."/>
            <person name="Potashkin J."/>
            <person name="Shpakovski G.V."/>
            <person name="Ussery D."/>
            <person name="Barrell B.G."/>
            <person name="Nurse P."/>
        </authorList>
    </citation>
    <scope>NUCLEOTIDE SEQUENCE [LARGE SCALE GENOMIC DNA]</scope>
    <source>
        <strain>972 / ATCC 24843</strain>
    </source>
</reference>
<sequence>MGIPDSTTDSRHSLSSAALSSASFENIYDPARKNESTNDVIDNHTDTEIDDHDNDHENLDSNNNNENNEAFNEKAAEKKLLPWYRRYFIWILIFIVALICSVLIGVLGGVLGHRTAVRDRHPSYKAKTYSLVKEYKGTTFFDGFDFMNITDPTHGFVQYLDRNSSAKLGLISANSSNVIMAADSKHNYSSGRPSIRLQSTQYFEHGLFILDLIHLPYGCGTWPAFWTLGDDWPNGGEIDIVEGVNVGTSNQVTLHTGDGCEMEDIKRVMTGTALQTNCWVDAPNSYNAGCGVENPSGPSYGEAFNKNGGGVFVLDWRSEGIRSWFFNRSEIPSDITSGSPQPAKWSEPVADFPDTKCDIDKMFSKQKILFDLTFCGDWAGSSVYSSAGCPGSCNDFVGNNPHNFTEAYWNIKSLAVYQY</sequence>
<feature type="chain" id="PRO_0000314117" description="Probable glycosidase C21B10.07">
    <location>
        <begin position="1"/>
        <end position="419"/>
    </location>
</feature>
<feature type="transmembrane region" description="Helical" evidence="2">
    <location>
        <begin position="88"/>
        <end position="108"/>
    </location>
</feature>
<feature type="domain" description="GH16" evidence="3">
    <location>
        <begin position="122"/>
        <end position="387"/>
    </location>
</feature>
<feature type="region of interest" description="Disordered" evidence="4">
    <location>
        <begin position="1"/>
        <end position="20"/>
    </location>
</feature>
<feature type="region of interest" description="Disordered" evidence="4">
    <location>
        <begin position="29"/>
        <end position="67"/>
    </location>
</feature>
<feature type="compositionally biased region" description="Basic and acidic residues" evidence="4">
    <location>
        <begin position="30"/>
        <end position="59"/>
    </location>
</feature>
<feature type="active site" description="Nucleophile" evidence="1">
    <location>
        <position position="237"/>
    </location>
</feature>
<feature type="active site" description="Proton donor" evidence="1">
    <location>
        <position position="242"/>
    </location>
</feature>
<name>YHZ7_SCHPO</name>
<gene>
    <name type="ORF">SPBC21B10.07</name>
</gene>
<dbReference type="EC" id="3.2.1.-"/>
<dbReference type="EMBL" id="CU329671">
    <property type="protein sequence ID" value="CAB57923.1"/>
    <property type="molecule type" value="Genomic_DNA"/>
</dbReference>
<dbReference type="PIR" id="T39920">
    <property type="entry name" value="T39920"/>
</dbReference>
<dbReference type="SMR" id="Q9USW3"/>
<dbReference type="BioGRID" id="276863">
    <property type="interactions" value="31"/>
</dbReference>
<dbReference type="STRING" id="284812.Q9USW3"/>
<dbReference type="CAZy" id="GH16">
    <property type="family name" value="Glycoside Hydrolase Family 16"/>
</dbReference>
<dbReference type="iPTMnet" id="Q9USW3"/>
<dbReference type="PaxDb" id="4896-SPBC21B10.07.1"/>
<dbReference type="EnsemblFungi" id="SPBC21B10.07.1">
    <property type="protein sequence ID" value="SPBC21B10.07.1:pep"/>
    <property type="gene ID" value="SPBC21B10.07"/>
</dbReference>
<dbReference type="KEGG" id="spo:2540333"/>
<dbReference type="PomBase" id="SPBC21B10.07"/>
<dbReference type="VEuPathDB" id="FungiDB:SPBC21B10.07"/>
<dbReference type="eggNOG" id="ENOG502QUM3">
    <property type="taxonomic scope" value="Eukaryota"/>
</dbReference>
<dbReference type="HOGENOM" id="CLU_016972_1_0_1"/>
<dbReference type="InParanoid" id="Q9USW3"/>
<dbReference type="OMA" id="HRTHERH"/>
<dbReference type="PhylomeDB" id="Q9USW3"/>
<dbReference type="PRO" id="PR:Q9USW3"/>
<dbReference type="Proteomes" id="UP000002485">
    <property type="component" value="Chromosome II"/>
</dbReference>
<dbReference type="GO" id="GO:0009277">
    <property type="term" value="C:fungal-type cell wall"/>
    <property type="evidence" value="ECO:0000266"/>
    <property type="project" value="PomBase"/>
</dbReference>
<dbReference type="GO" id="GO:0016020">
    <property type="term" value="C:membrane"/>
    <property type="evidence" value="ECO:0007669"/>
    <property type="project" value="UniProtKB-SubCell"/>
</dbReference>
<dbReference type="GO" id="GO:0004553">
    <property type="term" value="F:hydrolase activity, hydrolyzing O-glycosyl compounds"/>
    <property type="evidence" value="ECO:0007669"/>
    <property type="project" value="InterPro"/>
</dbReference>
<dbReference type="GO" id="GO:0071966">
    <property type="term" value="P:fungal-type cell wall polysaccharide metabolic process"/>
    <property type="evidence" value="ECO:0000266"/>
    <property type="project" value="PomBase"/>
</dbReference>
<dbReference type="GO" id="GO:0009251">
    <property type="term" value="P:glucan catabolic process"/>
    <property type="evidence" value="ECO:0000318"/>
    <property type="project" value="GO_Central"/>
</dbReference>
<dbReference type="CDD" id="cd02181">
    <property type="entry name" value="GH16_fungal_Lam16A_glucanase"/>
    <property type="match status" value="1"/>
</dbReference>
<dbReference type="FunFam" id="2.60.120.200:FF:000114">
    <property type="entry name" value="Probable endo-1,3(4)-beta-glucanase NFIA_089530"/>
    <property type="match status" value="1"/>
</dbReference>
<dbReference type="Gene3D" id="2.60.120.200">
    <property type="match status" value="1"/>
</dbReference>
<dbReference type="InterPro" id="IPR013320">
    <property type="entry name" value="ConA-like_dom_sf"/>
</dbReference>
<dbReference type="InterPro" id="IPR000757">
    <property type="entry name" value="GH16"/>
</dbReference>
<dbReference type="InterPro" id="IPR050546">
    <property type="entry name" value="Glycosyl_Hydrlase_16"/>
</dbReference>
<dbReference type="PANTHER" id="PTHR10963:SF24">
    <property type="entry name" value="GLYCOSIDASE C21B10.07-RELATED"/>
    <property type="match status" value="1"/>
</dbReference>
<dbReference type="PANTHER" id="PTHR10963">
    <property type="entry name" value="GLYCOSYL HYDROLASE-RELATED"/>
    <property type="match status" value="1"/>
</dbReference>
<dbReference type="SUPFAM" id="SSF49899">
    <property type="entry name" value="Concanavalin A-like lectins/glucanases"/>
    <property type="match status" value="1"/>
</dbReference>
<dbReference type="PROSITE" id="PS51762">
    <property type="entry name" value="GH16_2"/>
    <property type="match status" value="1"/>
</dbReference>
<keyword id="KW-0326">Glycosidase</keyword>
<keyword id="KW-0378">Hydrolase</keyword>
<keyword id="KW-0472">Membrane</keyword>
<keyword id="KW-1185">Reference proteome</keyword>
<keyword id="KW-0812">Transmembrane</keyword>
<keyword id="KW-1133">Transmembrane helix</keyword>
<protein>
    <recommendedName>
        <fullName>Probable glycosidase C21B10.07</fullName>
        <ecNumber>3.2.1.-</ecNumber>
    </recommendedName>
</protein>